<evidence type="ECO:0000255" key="1">
    <source>
        <dbReference type="HAMAP-Rule" id="MF_04201"/>
    </source>
</evidence>
<evidence type="ECO:0000255" key="2">
    <source>
        <dbReference type="PROSITE-ProRule" id="PRU01275"/>
    </source>
</evidence>
<proteinExistence type="inferred from homology"/>
<reference key="1">
    <citation type="journal article" date="1989" name="Arch. Virol.">
        <title>Nucleotide sequence of the gene encoding the membrane protein of human coronavirus 229 E.</title>
        <authorList>
            <person name="Raabe T."/>
            <person name="Siddell S.G."/>
        </authorList>
    </citation>
    <scope>NUCLEOTIDE SEQUENCE [GENOMIC RNA]</scope>
</reference>
<reference key="2">
    <citation type="journal article" date="1990" name="Virology">
        <title>Sequence analysis of the membrane protein gene of human coronavirus 229E.</title>
        <authorList>
            <person name="Jouvenne P."/>
            <person name="Richardson C.D."/>
            <person name="Schreiber S.S."/>
            <person name="Lai M.M.C."/>
            <person name="Talbot P.J."/>
        </authorList>
    </citation>
    <scope>NUCLEOTIDE SEQUENCE [GENOMIC RNA]</scope>
</reference>
<reference key="3">
    <citation type="journal article" date="2001" name="J. Gen. Virol.">
        <title>Infectious RNA transcribed in vitro from a cDNA copy of the human coronavirus genome cloned in vaccinia virus.</title>
        <authorList>
            <person name="Thiel V."/>
            <person name="Herold J."/>
            <person name="Schelle B."/>
            <person name="Siddell S.G."/>
        </authorList>
    </citation>
    <scope>NUCLEOTIDE SEQUENCE [GENOMIC RNA]</scope>
</reference>
<protein>
    <recommendedName>
        <fullName evidence="1">Membrane protein</fullName>
        <shortName evidence="1">M protein</shortName>
    </recommendedName>
    <alternativeName>
        <fullName evidence="1">E1 glycoprotein</fullName>
    </alternativeName>
    <alternativeName>
        <fullName evidence="1">Matrix glycoprotein</fullName>
    </alternativeName>
    <alternativeName>
        <fullName evidence="1">Membrane glycoprotein</fullName>
    </alternativeName>
</protein>
<name>VME1_CVH22</name>
<accession>P15422</accession>
<accession>Q9DLM9</accession>
<organism>
    <name type="scientific">Human coronavirus 229E</name>
    <name type="common">HCoV-229E</name>
    <dbReference type="NCBI Taxonomy" id="11137"/>
    <lineage>
        <taxon>Viruses</taxon>
        <taxon>Riboviria</taxon>
        <taxon>Orthornavirae</taxon>
        <taxon>Pisuviricota</taxon>
        <taxon>Pisoniviricetes</taxon>
        <taxon>Nidovirales</taxon>
        <taxon>Cornidovirineae</taxon>
        <taxon>Coronaviridae</taxon>
        <taxon>Orthocoronavirinae</taxon>
        <taxon>Alphacoronavirus</taxon>
        <taxon>Duvinacovirus</taxon>
    </lineage>
</organism>
<comment type="function">
    <text evidence="1 2">Component of the viral envelope that plays a central role in virus morphogenesis and assembly via its interactions with other viral proteins.</text>
</comment>
<comment type="subunit">
    <text evidence="1 2">Homomultimer. Interacts with envelope E protein in the budding compartment of the host cell, which is located between endoplasmic reticulum and the Golgi complex. Forms a complex with HE and S proteins. Interacts with nucleocapsid N protein. This interaction probably participates in RNA packaging into the virus.</text>
</comment>
<comment type="subcellular location">
    <subcellularLocation>
        <location evidence="1">Virion membrane</location>
        <topology evidence="1">Multi-pass membrane protein</topology>
    </subcellularLocation>
    <subcellularLocation>
        <location evidence="1">Host Golgi apparatus membrane</location>
        <topology evidence="1">Multi-pass membrane protein</topology>
    </subcellularLocation>
    <text evidence="1">Largely embedded in the lipid bilayer.</text>
</comment>
<comment type="similarity">
    <text evidence="1">Belongs to the alphacoronaviruses M protein family.</text>
</comment>
<keyword id="KW-0325">Glycoprotein</keyword>
<keyword id="KW-1040">Host Golgi apparatus</keyword>
<keyword id="KW-1043">Host membrane</keyword>
<keyword id="KW-0472">Membrane</keyword>
<keyword id="KW-1185">Reference proteome</keyword>
<keyword id="KW-0812">Transmembrane</keyword>
<keyword id="KW-1133">Transmembrane helix</keyword>
<keyword id="KW-0261">Viral envelope protein</keyword>
<keyword id="KW-0468">Viral matrix protein</keyword>
<keyword id="KW-0946">Virion</keyword>
<feature type="chain" id="PRO_0000106032" description="Membrane protein">
    <location>
        <begin position="1"/>
        <end position="225"/>
    </location>
</feature>
<feature type="topological domain" description="Virion surface" evidence="1">
    <location>
        <begin position="1"/>
        <end position="10"/>
    </location>
</feature>
<feature type="transmembrane region" description="Helical" evidence="1">
    <location>
        <begin position="11"/>
        <end position="31"/>
    </location>
</feature>
<feature type="topological domain" description="Intravirion" evidence="1">
    <location>
        <begin position="32"/>
        <end position="40"/>
    </location>
</feature>
<feature type="transmembrane region" description="Helical" evidence="1">
    <location>
        <begin position="41"/>
        <end position="61"/>
    </location>
</feature>
<feature type="topological domain" description="Virion surface" evidence="1">
    <location>
        <begin position="62"/>
        <end position="74"/>
    </location>
</feature>
<feature type="transmembrane region" description="Helical" evidence="1">
    <location>
        <begin position="75"/>
        <end position="95"/>
    </location>
</feature>
<feature type="topological domain" description="Intravirion" evidence="1">
    <location>
        <begin position="96"/>
        <end position="225"/>
    </location>
</feature>
<feature type="region of interest" description="Interaction with N protein" evidence="1">
    <location>
        <begin position="199"/>
        <end position="215"/>
    </location>
</feature>
<feature type="sequence conflict" description="In Ref. 2; AAA45461." ref="2">
    <original>F</original>
    <variation>L</variation>
    <location>
        <position position="43"/>
    </location>
</feature>
<feature type="sequence conflict" description="In Ref. 2; AAA45461." ref="2">
    <original>FF</original>
    <variation>LL</variation>
    <location>
        <begin position="81"/>
        <end position="82"/>
    </location>
</feature>
<feature type="sequence conflict" description="In Ref. 1; CAA33521." ref="1">
    <original>S</original>
    <variation>C</variation>
    <location>
        <position position="191"/>
    </location>
</feature>
<gene>
    <name evidence="1" type="primary">M</name>
    <name type="ORF">6</name>
</gene>
<organismHost>
    <name type="scientific">Homo sapiens</name>
    <name type="common">Human</name>
    <dbReference type="NCBI Taxonomy" id="9606"/>
</organismHost>
<dbReference type="EMBL" id="X15498">
    <property type="protein sequence ID" value="CAA33521.1"/>
    <property type="molecule type" value="Genomic_RNA"/>
</dbReference>
<dbReference type="EMBL" id="M33560">
    <property type="protein sequence ID" value="AAA45461.1"/>
    <property type="molecule type" value="Genomic_RNA"/>
</dbReference>
<dbReference type="EMBL" id="AF304460">
    <property type="protein sequence ID" value="AAG48596.1"/>
    <property type="molecule type" value="Genomic_RNA"/>
</dbReference>
<dbReference type="PIR" id="A34127">
    <property type="entry name" value="MMIHHC"/>
</dbReference>
<dbReference type="RefSeq" id="NP_073555.1">
    <property type="nucleotide sequence ID" value="NC_002645.1"/>
</dbReference>
<dbReference type="SMR" id="P15422"/>
<dbReference type="DNASU" id="918762"/>
<dbReference type="GeneID" id="918762"/>
<dbReference type="KEGG" id="vg:918762"/>
<dbReference type="OrthoDB" id="8130at10239"/>
<dbReference type="Proteomes" id="UP000006716">
    <property type="component" value="Genome"/>
</dbReference>
<dbReference type="GO" id="GO:0044178">
    <property type="term" value="C:host cell Golgi membrane"/>
    <property type="evidence" value="ECO:0007669"/>
    <property type="project" value="UniProtKB-SubCell"/>
</dbReference>
<dbReference type="GO" id="GO:0016020">
    <property type="term" value="C:membrane"/>
    <property type="evidence" value="ECO:0007669"/>
    <property type="project" value="UniProtKB-UniRule"/>
</dbReference>
<dbReference type="GO" id="GO:0019031">
    <property type="term" value="C:viral envelope"/>
    <property type="evidence" value="ECO:0007669"/>
    <property type="project" value="UniProtKB-UniRule"/>
</dbReference>
<dbReference type="GO" id="GO:0055036">
    <property type="term" value="C:virion membrane"/>
    <property type="evidence" value="ECO:0007669"/>
    <property type="project" value="UniProtKB-SubCell"/>
</dbReference>
<dbReference type="GO" id="GO:0039660">
    <property type="term" value="F:structural constituent of virion"/>
    <property type="evidence" value="ECO:0007669"/>
    <property type="project" value="UniProtKB-UniRule"/>
</dbReference>
<dbReference type="CDD" id="cd21564">
    <property type="entry name" value="alphaCoV_M"/>
    <property type="match status" value="1"/>
</dbReference>
<dbReference type="HAMAP" id="MF_04201">
    <property type="entry name" value="ALPHA_CORONA_M"/>
    <property type="match status" value="1"/>
</dbReference>
<dbReference type="InterPro" id="IPR042551">
    <property type="entry name" value="ALPHA_CORONA_M"/>
</dbReference>
<dbReference type="InterPro" id="IPR002574">
    <property type="entry name" value="M_CoV"/>
</dbReference>
<dbReference type="Pfam" id="PF01635">
    <property type="entry name" value="CoV_M"/>
    <property type="match status" value="1"/>
</dbReference>
<dbReference type="PROSITE" id="PS51927">
    <property type="entry name" value="COV_M"/>
    <property type="match status" value="1"/>
</dbReference>
<sequence>MSNDNCTGDIVTHLKNWNFGWNVILTIFIVILQFGHYKYSRLFYGLKMLVLWLLWPLVLALSIFDTWANWDSNWAFVAFSFFMAVSTLVMWVMYFANSFRLFRRARTFWAWNPEVNAITVTTVLGQTYYQPIQQAPTGITVTLLSGVLYVDGHRLASGVQVHNLPEYMTVAVPSTTIIYSRVGRSVNSQNSTGWVFYVRVKHGDFSAVSSPMSNMTENERLLHFF</sequence>